<sequence length="800" mass="93255">MSRRRAHDTEDEGYDHRRNKRRRVSENQEIEDRLESLILRVGERSTSSVESNLEGLVSVLEADLGTFRLKILRILSDCAVRMPEKCTVYTTLVGLLNAKNYKFGGEFVDHMVKTFKESLKMCRWDAARYSLRFLADLVNCHVISATSLLQLLDTMIDVSNEDTVPQVRRDWFVFAVLSTLPWVGRDLYEKKESALESLLLRIEVYLNKRSKKHHNALRVWSSDAPHPQEEYLDCLWAQIRKLRQDNWAEKHIPRPYLVFDSILCEALQHNLPTIVPPPHHDNFEYPMPWVVYRMFDYTDCPDGPNLPGAHSIERFLIEEHLHHIIETYHHERKDCAAQLLSFPYKHKIPLEYCIVEVVFAELFHMPTPRYLDICYGSILIELCKLQPATLPQVLAQATEILFMRIDSMNTSCFDRFVNWFSYHLSNFKFTWSWDEWDSWLLLDGEHPRPKFIQEVLQKCLRLSYHQRITEMMPTTYAKLIPLTPVPNYKYANEEAASLPGTTVAHQLVVAIRQKCTPEEVVNILKDIPNSGYSGEEMSDGSFNALKIDVFVQTLLNLGSKSFSHSFAAISKFHSVFRALAETEEAQICILHNIFELWSSHQQMMVVLIDKLLKLQIVDCSAVATWIFSKEMTGEFTKLYLWEILHLTIKKMNKHVIKLNSELSEAKDKLAKADSSSSDSEDDSSHKRKKPITHADKPSEEVVERMEEKLEAANVNQKRLFLIVFQRFIMILSEHLLRSDTDGRDPDTDWYRWTIGRLQQVFLMHHEQVQKYSSTLETLLFTSDLDTHILEVFQQFVALRA</sequence>
<name>NCBP1_DROSE</name>
<gene>
    <name type="primary">Cbp80</name>
    <name type="ORF">GM12358</name>
</gene>
<organism>
    <name type="scientific">Drosophila sechellia</name>
    <name type="common">Fruit fly</name>
    <dbReference type="NCBI Taxonomy" id="7238"/>
    <lineage>
        <taxon>Eukaryota</taxon>
        <taxon>Metazoa</taxon>
        <taxon>Ecdysozoa</taxon>
        <taxon>Arthropoda</taxon>
        <taxon>Hexapoda</taxon>
        <taxon>Insecta</taxon>
        <taxon>Pterygota</taxon>
        <taxon>Neoptera</taxon>
        <taxon>Endopterygota</taxon>
        <taxon>Diptera</taxon>
        <taxon>Brachycera</taxon>
        <taxon>Muscomorpha</taxon>
        <taxon>Ephydroidea</taxon>
        <taxon>Drosophilidae</taxon>
        <taxon>Drosophila</taxon>
        <taxon>Sophophora</taxon>
    </lineage>
</organism>
<protein>
    <recommendedName>
        <fullName>Nuclear cap-binding protein subunit 1</fullName>
    </recommendedName>
    <alternativeName>
        <fullName>80 kDa nuclear cap-binding protein</fullName>
        <shortName>CBP80</shortName>
        <shortName>NCBP 80 kDa subunit</shortName>
    </alternativeName>
</protein>
<evidence type="ECO:0000250" key="1"/>
<evidence type="ECO:0000256" key="2">
    <source>
        <dbReference type="SAM" id="MobiDB-lite"/>
    </source>
</evidence>
<evidence type="ECO:0000305" key="3"/>
<keyword id="KW-0506">mRNA capping</keyword>
<keyword id="KW-0507">mRNA processing</keyword>
<keyword id="KW-0508">mRNA splicing</keyword>
<keyword id="KW-0539">Nucleus</keyword>
<keyword id="KW-0597">Phosphoprotein</keyword>
<keyword id="KW-1185">Reference proteome</keyword>
<keyword id="KW-0943">RNA-mediated gene silencing</keyword>
<accession>B4I0W6</accession>
<comment type="function">
    <text evidence="1">Component of the cap-binding complex (CBC), which binds cotranscriptionally to the 5'-cap of pre-mRNAs and is involved in various processes such as pre-mRNA splicing and RNA-mediated gene silencing (RNAi). The CBC complex is involved in miRNA-mediated RNA interference via its interaction with Ars2 and is required for primary microRNAs (miRNAs) processing. Also involved in innate immunity via the short interfering RNAs (siRNAs) processing machinery by restricting the viral RNA production. In the CBC complex, Cbp80 does not bind directly capped RNAs (m7GpppG-capped RNA) but is required to stabilize the movement of the N-terminal loop of Cbp20 and lock the CBC into a high affinity cap-binding state with the cap structure (By similarity).</text>
</comment>
<comment type="subunit">
    <text evidence="1">Component of the nuclear cap-binding complex (CBC), a heterodimer composed of Cbp80 and Cbp20 that interacts with m7GpppG-capped RNA.</text>
</comment>
<comment type="subcellular location">
    <subcellularLocation>
        <location evidence="1">Nucleus</location>
    </subcellularLocation>
</comment>
<comment type="similarity">
    <text evidence="3">Belongs to the NCBP1 family.</text>
</comment>
<dbReference type="EMBL" id="CH480819">
    <property type="protein sequence ID" value="EDW53147.1"/>
    <property type="molecule type" value="Genomic_DNA"/>
</dbReference>
<dbReference type="RefSeq" id="XP_002036988.1">
    <property type="nucleotide sequence ID" value="XM_002036952.1"/>
</dbReference>
<dbReference type="SMR" id="B4I0W6"/>
<dbReference type="STRING" id="7238.B4I0W6"/>
<dbReference type="EnsemblMetazoa" id="FBtr0195343">
    <property type="protein sequence ID" value="FBpp0193835"/>
    <property type="gene ID" value="FBgn0167295"/>
</dbReference>
<dbReference type="GeneID" id="6612480"/>
<dbReference type="KEGG" id="dse:6612480"/>
<dbReference type="CTD" id="44409"/>
<dbReference type="HOGENOM" id="CLU_013207_0_0_1"/>
<dbReference type="OMA" id="CAAEGLM"/>
<dbReference type="PhylomeDB" id="B4I0W6"/>
<dbReference type="ChiTaRS" id="Cbp80">
    <property type="organism name" value="fly"/>
</dbReference>
<dbReference type="Proteomes" id="UP000001292">
    <property type="component" value="Unassembled WGS sequence"/>
</dbReference>
<dbReference type="GO" id="GO:0005846">
    <property type="term" value="C:nuclear cap binding complex"/>
    <property type="evidence" value="ECO:0007669"/>
    <property type="project" value="InterPro"/>
</dbReference>
<dbReference type="GO" id="GO:0005634">
    <property type="term" value="C:nucleus"/>
    <property type="evidence" value="ECO:0007669"/>
    <property type="project" value="UniProtKB-SubCell"/>
</dbReference>
<dbReference type="GO" id="GO:0099524">
    <property type="term" value="C:postsynaptic cytosol"/>
    <property type="evidence" value="ECO:0007669"/>
    <property type="project" value="EnsemblMetazoa"/>
</dbReference>
<dbReference type="GO" id="GO:0099523">
    <property type="term" value="C:presynaptic cytosol"/>
    <property type="evidence" value="ECO:0007669"/>
    <property type="project" value="EnsemblMetazoa"/>
</dbReference>
<dbReference type="GO" id="GO:0003729">
    <property type="term" value="F:mRNA binding"/>
    <property type="evidence" value="ECO:0007669"/>
    <property type="project" value="TreeGrafter"/>
</dbReference>
<dbReference type="GO" id="GO:0000339">
    <property type="term" value="F:RNA cap binding"/>
    <property type="evidence" value="ECO:0007669"/>
    <property type="project" value="InterPro"/>
</dbReference>
<dbReference type="GO" id="GO:0006370">
    <property type="term" value="P:7-methylguanosine mRNA capping"/>
    <property type="evidence" value="ECO:0007669"/>
    <property type="project" value="UniProtKB-KW"/>
</dbReference>
<dbReference type="GO" id="GO:0006406">
    <property type="term" value="P:mRNA export from nucleus"/>
    <property type="evidence" value="ECO:0007669"/>
    <property type="project" value="InterPro"/>
</dbReference>
<dbReference type="GO" id="GO:0045071">
    <property type="term" value="P:negative regulation of viral genome replication"/>
    <property type="evidence" value="ECO:0007669"/>
    <property type="project" value="EnsemblMetazoa"/>
</dbReference>
<dbReference type="GO" id="GO:0000184">
    <property type="term" value="P:nuclear-transcribed mRNA catabolic process, nonsense-mediated decay"/>
    <property type="evidence" value="ECO:0007669"/>
    <property type="project" value="TreeGrafter"/>
</dbReference>
<dbReference type="GO" id="GO:0031053">
    <property type="term" value="P:primary miRNA processing"/>
    <property type="evidence" value="ECO:0007669"/>
    <property type="project" value="EnsemblMetazoa"/>
</dbReference>
<dbReference type="GO" id="GO:0035194">
    <property type="term" value="P:regulatory ncRNA-mediated post-transcriptional gene silencing"/>
    <property type="evidence" value="ECO:0007669"/>
    <property type="project" value="EnsemblMetazoa"/>
</dbReference>
<dbReference type="GO" id="GO:0008380">
    <property type="term" value="P:RNA splicing"/>
    <property type="evidence" value="ECO:0007669"/>
    <property type="project" value="UniProtKB-KW"/>
</dbReference>
<dbReference type="GO" id="GO:0030422">
    <property type="term" value="P:siRNA processing"/>
    <property type="evidence" value="ECO:0007669"/>
    <property type="project" value="EnsemblMetazoa"/>
</dbReference>
<dbReference type="FunFam" id="1.25.40.180:FF:000010">
    <property type="entry name" value="Nuclear cap-binding protein subunit 1"/>
    <property type="match status" value="1"/>
</dbReference>
<dbReference type="FunFam" id="1.25.40.180:FF:000041">
    <property type="entry name" value="Nuclear cap-binding protein subunit 1"/>
    <property type="match status" value="1"/>
</dbReference>
<dbReference type="Gene3D" id="1.25.40.180">
    <property type="match status" value="3"/>
</dbReference>
<dbReference type="InterPro" id="IPR016024">
    <property type="entry name" value="ARM-type_fold"/>
</dbReference>
<dbReference type="InterPro" id="IPR027159">
    <property type="entry name" value="CBP80"/>
</dbReference>
<dbReference type="InterPro" id="IPR015172">
    <property type="entry name" value="MIF4G-like_typ-1"/>
</dbReference>
<dbReference type="InterPro" id="IPR015174">
    <property type="entry name" value="MIF4G-like_typ-2"/>
</dbReference>
<dbReference type="InterPro" id="IPR003890">
    <property type="entry name" value="MIF4G-like_typ-3"/>
</dbReference>
<dbReference type="PANTHER" id="PTHR12412">
    <property type="entry name" value="CAP BINDING PROTEIN"/>
    <property type="match status" value="1"/>
</dbReference>
<dbReference type="PANTHER" id="PTHR12412:SF2">
    <property type="entry name" value="NUCLEAR CAP-BINDING PROTEIN SUBUNIT 1"/>
    <property type="match status" value="1"/>
</dbReference>
<dbReference type="Pfam" id="PF02854">
    <property type="entry name" value="MIF4G"/>
    <property type="match status" value="1"/>
</dbReference>
<dbReference type="Pfam" id="PF09088">
    <property type="entry name" value="MIF4G_like"/>
    <property type="match status" value="1"/>
</dbReference>
<dbReference type="Pfam" id="PF09090">
    <property type="entry name" value="MIF4G_like_2"/>
    <property type="match status" value="1"/>
</dbReference>
<dbReference type="SMART" id="SM00543">
    <property type="entry name" value="MIF4G"/>
    <property type="match status" value="1"/>
</dbReference>
<dbReference type="SUPFAM" id="SSF48371">
    <property type="entry name" value="ARM repeat"/>
    <property type="match status" value="3"/>
</dbReference>
<proteinExistence type="inferred from homology"/>
<reference key="1">
    <citation type="journal article" date="2007" name="Nature">
        <title>Evolution of genes and genomes on the Drosophila phylogeny.</title>
        <authorList>
            <consortium name="Drosophila 12 genomes consortium"/>
        </authorList>
    </citation>
    <scope>NUCLEOTIDE SEQUENCE [LARGE SCALE GENOMIC DNA]</scope>
    <source>
        <strain>Rob3c / Tucson 14021-0248.25</strain>
    </source>
</reference>
<feature type="chain" id="PRO_0000385239" description="Nuclear cap-binding protein subunit 1">
    <location>
        <begin position="1"/>
        <end position="800"/>
    </location>
</feature>
<feature type="domain" description="MIF4G">
    <location>
        <begin position="31"/>
        <end position="243"/>
    </location>
</feature>
<feature type="region of interest" description="Disordered" evidence="2">
    <location>
        <begin position="1"/>
        <end position="26"/>
    </location>
</feature>
<feature type="region of interest" description="Disordered" evidence="2">
    <location>
        <begin position="669"/>
        <end position="700"/>
    </location>
</feature>
<feature type="modified residue" description="Phosphothreonine" evidence="1">
    <location>
        <position position="9"/>
    </location>
</feature>